<protein>
    <recommendedName>
        <fullName>Probable polyketide synthase 2</fullName>
        <shortName>dipks2</shortName>
        <ecNumber>2.3.1.-</ecNumber>
    </recommendedName>
</protein>
<sequence>MIESTSNKSRDVAVIGIGLRLPGGSNTPLELWNNLIKGIDGIVETKERWSDTFSEMGEVSSKYAGLIDFDQWMSFDPLHFAINPSDAKEIDPQQKILLKTTWEAFEDAQIDPLSLRGSDTSVYVGASSMDYASINTDPNKQPINCFNVNLSGVSNRISYCYDLRGTSLTIDTACSSSLNAVHLGYESIVNGKSDYSIVGGVNFIINPQQSRAFKYAMVTSKTGKCKAFDESADGFVRSEGAVVLILKSLSKSIEDGNQIYSIIKGSSSNVDGTLNKTNYFAPSKVSQSNNMQKAFDSTNGELTPNDISFFELHGTGTQIGDPIEVEAVSTLFKDIKTKESPLLIGSIKSNIGHLEPASGVASLAKVCLMLKNREFVKNIHFETPNPNIKFDEWKVKVCTQNTPFPTIRGKPISIAINSFGITGSNACLLLSEYLKTNITTTNDQLEPSTTSYLIPLSSSSKKSLELYKNELTNNIETFSKSIEFKDFISYHINSKAIKLASRSVLMVKDWDELKSSLNLNEPLIYSSKGNKSGNIMKDNNKNPILVFVFCGIGGQWNQMGKQLYETSKVFKQSIDEIDQIFNRLFGYSILKKLRSISDDDSKGINEFITSQPSIFMLQVSLFEFYKSWGINPSINVGHSFGEISSACCSGMLDLETACFIVYKRSIIQTKTIGSGGMLVIGLSEDEYKKQYQSQYPLIEISCFNSPSSIVISGSELDLTTITSSLKEKNIFTYLLGSPAALHSSKQKVIKDDILTQLKDIKFKQPTIKTFSTVTTNLFDNSTTPFDSNYIFSNIRKPVSFEKTIKNIFNHIETNDLGSNVIFLELSPLPTLTNYIKEMIPQNSNYFYIDDESITILTSLNKKKSIDELQEIKSTISQIYCSGYNVNFKSQLTTTTTTTFGNLIIDSNKIVKGFTSYYLPRYQWDESNYFKVGRISKQISQGPTATQLGYRNDVSPFMSYTSYIDIKEEPFKFLKCHQSRGRNLFPGNAYLENVLKVFPDQDLTFHLIEYRSPLILKEGIKHIISTNIYPSAKNEYRVTFHYKDSFDKWILGCSARFSVLKHNSDLENQKIDVESLKAKCNWTTIKRKEFYEVLKTNTSLALTGQFQCIEEAYYGYNCCLAKISMNETLTKLSQYDNELFLNACTIDGGFQLLGLFRDNPDTFVMDRVELLRFYASNIPKSSKFRENYPFIYTYTEFISQIGNSVYANINTFLPDGTLLFNTPVVCYSSISTDIKNQLSIENPNHQLYSTVLQSLESPLSVTTQNAIIDEKLFLSFLPTPVANIRKAFTTCIFSNIKKIYQSITPAKINTSTVDSLIDSYFKICETDNIEKRKLGETLFNALKLNYSIIEYSSQAKLIKLLSTNQIEIMNKITTHLLNETKPTTNTTETTPVSSSQKLPEQIQLIENIITKSVLPLVNEKIVFRILEISSGIGQLSKIIVTRLNELLQQNPLAEIDIELTFTDREDITLIKEKLTTLLYSTSSTADINSKDLSSRKTSLIFTQLDLNDKDLISSKTIYPSYYDIIVLNGLDGIKDLNQSIETIYQILNPNGYFIMIDTLFKANKSDLKNYELYQQWLSFNYFDSTKDLDSWKKLLTQDFKLINFTATSSQPWVILCQKPRFFETVSTENPISTTLSCYDQVIIFGTIDNINESKALSKLMDVNDRGTDIYCIKTLDEFETHVKETPLTDESVIVYVNTINQVFISFISYSLEYIKINQHLLRTNCNAKHVLLTRSAFIETTNTLVSATVGAFRYFCEFSQLDLYLMDFDDSIYLKSMQFINVTHEMTNPNKHYQREFIFRGDKVYYERVTQETNLKLKLKSTSYISEPTQLYAKLGQNLQYQLKPFENKIPEGFIEVKVLASGINFKDNLVYRRLVPNEAVNHTGNSNDPEFGYECSGIVSRVGDGVTKFKVGDEVVGLGFNCTGSFVTLEQFRFVLKPKNLTHVEAASIPVVYLTSYYSLFVAGYLSIEKKESVLIHGGTGGIGLACINLLKAKGFKGYLFVTVGSKEKENFLRVTYGNFITGIYSSQNTDYLLEIKKKIQQLTGNNLIFKQFGVAKMGIDLIINTLSNEFMDANFNSLCQGGRIIDLSVTHMNSQDTTDFRKFRYCISYSSVELLLNGFERNKLILQEVMDMFVNENLALLPIKEYSVKDIKEAIEFIAERKHIGKIVVNHENYDLISQTLVSNDNEFYKDFLIPKANYRISADCNLGKTVLLTGQLGLSLSIIKWIIAFNNLEQPVENILVLSLSPIKYELEHMICYCKHVNNQIKIIFKQVDISDMCALDDAIGEIYKENENLPLVSSIFHNAFAPSECDALDIDEDHLRISHSAKTMGMINLNSLSTGIWSESIKNFVLSSSITSILGSQRQCGYISANCIIDAVSRLRASEGLPCTSINWGVLGTGFVSRNESVSKLFEYQGFIPISMDMLIGTLDLFLQNSGKLNNKIVASFNYNNVSAAFRNHHLSYKLNYFLNPVYSKGSTFDDNELSIRDDILEKFSEYLSTEKSKLSLDIKLIDYGSSSIMLVELKNYLDKTYTPNILSIAQLQNVTINQLIQAVIQAVSKLKKPTTNQQSQQPIISNIKWEDEIALDPTIKPTQQIIDTYKNEMTQLYKNNNNKTSLGGLQVLLTGPCTFSGTHILSNLLLSSKTKVIHCLLPMETPEQVMCTIIDNFKAQGLYDQLNLANVLSKIKPIAADFTRPIFGLDTDDYIELSKKIDIVINAASNTTKHYCAHISYEDTNKEYLHGVSHLLRFASSEKLKRVVQISTLGRYSDLQRNSLDEYYFPEVDFSFISDQNQLVSGYIQSKIVAEYHLKQASNRGIPCLIVRTPFTFPGNNGIGREADFTQLLLQSCYTLNCYPTESHIQLYTAPVTWYAKNITLMAVGSDISQDGCWDTINTSPIENLLCFNLFGGGFDFGDLLVDISKDLSWKEVPFETLVKKAAVNETECCKRLASFVLKKKGDFLKNLGVIPGNFTVNENLKNYLTLNNSFDGWLVTKQLVYNHLSYVFKKKVF</sequence>
<accession>Q55DM7</accession>
<keyword id="KW-0596">Phosphopantetheine</keyword>
<keyword id="KW-0597">Phosphoprotein</keyword>
<keyword id="KW-1185">Reference proteome</keyword>
<keyword id="KW-0808">Transferase</keyword>
<evidence type="ECO:0000250" key="1"/>
<evidence type="ECO:0000255" key="2">
    <source>
        <dbReference type="PROSITE-ProRule" id="PRU00258"/>
    </source>
</evidence>
<evidence type="ECO:0000255" key="3">
    <source>
        <dbReference type="PROSITE-ProRule" id="PRU01348"/>
    </source>
</evidence>
<evidence type="ECO:0000255" key="4">
    <source>
        <dbReference type="PROSITE-ProRule" id="PRU01363"/>
    </source>
</evidence>
<evidence type="ECO:0000255" key="5">
    <source>
        <dbReference type="PROSITE-ProRule" id="PRU10022"/>
    </source>
</evidence>
<gene>
    <name type="primary">pks2</name>
    <name type="ORF">DDB_G0270572</name>
</gene>
<reference key="1">
    <citation type="journal article" date="2005" name="Nature">
        <title>The genome of the social amoeba Dictyostelium discoideum.</title>
        <authorList>
            <person name="Eichinger L."/>
            <person name="Pachebat J.A."/>
            <person name="Gloeckner G."/>
            <person name="Rajandream M.A."/>
            <person name="Sucgang R."/>
            <person name="Berriman M."/>
            <person name="Song J."/>
            <person name="Olsen R."/>
            <person name="Szafranski K."/>
            <person name="Xu Q."/>
            <person name="Tunggal B."/>
            <person name="Kummerfeld S."/>
            <person name="Madera M."/>
            <person name="Konfortov B.A."/>
            <person name="Rivero F."/>
            <person name="Bankier A.T."/>
            <person name="Lehmann R."/>
            <person name="Hamlin N."/>
            <person name="Davies R."/>
            <person name="Gaudet P."/>
            <person name="Fey P."/>
            <person name="Pilcher K."/>
            <person name="Chen G."/>
            <person name="Saunders D."/>
            <person name="Sodergren E.J."/>
            <person name="Davis P."/>
            <person name="Kerhornou A."/>
            <person name="Nie X."/>
            <person name="Hall N."/>
            <person name="Anjard C."/>
            <person name="Hemphill L."/>
            <person name="Bason N."/>
            <person name="Farbrother P."/>
            <person name="Desany B."/>
            <person name="Just E."/>
            <person name="Morio T."/>
            <person name="Rost R."/>
            <person name="Churcher C.M."/>
            <person name="Cooper J."/>
            <person name="Haydock S."/>
            <person name="van Driessche N."/>
            <person name="Cronin A."/>
            <person name="Goodhead I."/>
            <person name="Muzny D.M."/>
            <person name="Mourier T."/>
            <person name="Pain A."/>
            <person name="Lu M."/>
            <person name="Harper D."/>
            <person name="Lindsay R."/>
            <person name="Hauser H."/>
            <person name="James K.D."/>
            <person name="Quiles M."/>
            <person name="Madan Babu M."/>
            <person name="Saito T."/>
            <person name="Buchrieser C."/>
            <person name="Wardroper A."/>
            <person name="Felder M."/>
            <person name="Thangavelu M."/>
            <person name="Johnson D."/>
            <person name="Knights A."/>
            <person name="Loulseged H."/>
            <person name="Mungall K.L."/>
            <person name="Oliver K."/>
            <person name="Price C."/>
            <person name="Quail M.A."/>
            <person name="Urushihara H."/>
            <person name="Hernandez J."/>
            <person name="Rabbinowitsch E."/>
            <person name="Steffen D."/>
            <person name="Sanders M."/>
            <person name="Ma J."/>
            <person name="Kohara Y."/>
            <person name="Sharp S."/>
            <person name="Simmonds M.N."/>
            <person name="Spiegler S."/>
            <person name="Tivey A."/>
            <person name="Sugano S."/>
            <person name="White B."/>
            <person name="Walker D."/>
            <person name="Woodward J.R."/>
            <person name="Winckler T."/>
            <person name="Tanaka Y."/>
            <person name="Shaulsky G."/>
            <person name="Schleicher M."/>
            <person name="Weinstock G.M."/>
            <person name="Rosenthal A."/>
            <person name="Cox E.C."/>
            <person name="Chisholm R.L."/>
            <person name="Gibbs R.A."/>
            <person name="Loomis W.F."/>
            <person name="Platzer M."/>
            <person name="Kay R.R."/>
            <person name="Williams J.G."/>
            <person name="Dear P.H."/>
            <person name="Noegel A.A."/>
            <person name="Barrell B.G."/>
            <person name="Kuspa A."/>
        </authorList>
    </citation>
    <scope>NUCLEOTIDE SEQUENCE [LARGE SCALE GENOMIC DNA]</scope>
    <source>
        <strain>AX4</strain>
    </source>
</reference>
<reference key="2">
    <citation type="journal article" date="2007" name="Bioinformatics">
        <title>Polyketide synthase genes and the natural products potential of Dictyostelium discoideum.</title>
        <authorList>
            <person name="Zucko J."/>
            <person name="Skunca N."/>
            <person name="Curk T."/>
            <person name="Zupan B."/>
            <person name="Long P.F."/>
            <person name="Cullum J."/>
            <person name="Kessin R.H."/>
            <person name="Hranueli D."/>
        </authorList>
    </citation>
    <scope>IDENTIFICATION</scope>
</reference>
<proteinExistence type="inferred from homology"/>
<organism>
    <name type="scientific">Dictyostelium discoideum</name>
    <name type="common">Social amoeba</name>
    <dbReference type="NCBI Taxonomy" id="44689"/>
    <lineage>
        <taxon>Eukaryota</taxon>
        <taxon>Amoebozoa</taxon>
        <taxon>Evosea</taxon>
        <taxon>Eumycetozoa</taxon>
        <taxon>Dictyostelia</taxon>
        <taxon>Dictyosteliales</taxon>
        <taxon>Dictyosteliaceae</taxon>
        <taxon>Dictyostelium</taxon>
    </lineage>
</organism>
<name>PKS2_DICDI</name>
<dbReference type="EC" id="2.3.1.-"/>
<dbReference type="EMBL" id="AAFI02000005">
    <property type="protein sequence ID" value="EAL72636.1"/>
    <property type="molecule type" value="Genomic_DNA"/>
</dbReference>
<dbReference type="RefSeq" id="XP_646104.1">
    <property type="nucleotide sequence ID" value="XM_641012.1"/>
</dbReference>
<dbReference type="SMR" id="Q55DM7"/>
<dbReference type="FunCoup" id="Q55DM7">
    <property type="interactions" value="1"/>
</dbReference>
<dbReference type="STRING" id="44689.Q55DM7"/>
<dbReference type="GlyGen" id="Q55DM7">
    <property type="glycosylation" value="2 sites"/>
</dbReference>
<dbReference type="PaxDb" id="44689-DDB0230079"/>
<dbReference type="EnsemblProtists" id="EAL72636">
    <property type="protein sequence ID" value="EAL72636"/>
    <property type="gene ID" value="DDB_G0270572"/>
</dbReference>
<dbReference type="GeneID" id="8617054"/>
<dbReference type="KEGG" id="ddi:DDB_G0270572"/>
<dbReference type="dictyBase" id="DDB_G0270572">
    <property type="gene designation" value="pks2"/>
</dbReference>
<dbReference type="VEuPathDB" id="AmoebaDB:DDB_G0270572"/>
<dbReference type="eggNOG" id="KOG1202">
    <property type="taxonomic scope" value="Eukaryota"/>
</dbReference>
<dbReference type="HOGENOM" id="CLU_000022_31_0_1"/>
<dbReference type="InParanoid" id="Q55DM7"/>
<dbReference type="OMA" id="RHYEADV"/>
<dbReference type="PhylomeDB" id="Q55DM7"/>
<dbReference type="PRO" id="PR:Q55DM7"/>
<dbReference type="Proteomes" id="UP000002195">
    <property type="component" value="Chromosome 1"/>
</dbReference>
<dbReference type="GO" id="GO:0004315">
    <property type="term" value="F:3-oxoacyl-[acyl-carrier-protein] synthase activity"/>
    <property type="evidence" value="ECO:0007669"/>
    <property type="project" value="InterPro"/>
</dbReference>
<dbReference type="GO" id="GO:0016491">
    <property type="term" value="F:oxidoreductase activity"/>
    <property type="evidence" value="ECO:0007669"/>
    <property type="project" value="InterPro"/>
</dbReference>
<dbReference type="GO" id="GO:0099139">
    <property type="term" value="P:cheating during chimeric sorocarp development"/>
    <property type="evidence" value="ECO:0000315"/>
    <property type="project" value="dictyBase"/>
</dbReference>
<dbReference type="GO" id="GO:0006633">
    <property type="term" value="P:fatty acid biosynthetic process"/>
    <property type="evidence" value="ECO:0000318"/>
    <property type="project" value="GO_Central"/>
</dbReference>
<dbReference type="CDD" id="cd05195">
    <property type="entry name" value="enoyl_red"/>
    <property type="match status" value="1"/>
</dbReference>
<dbReference type="CDD" id="cd08954">
    <property type="entry name" value="KR_1_FAS_SDR_x"/>
    <property type="match status" value="1"/>
</dbReference>
<dbReference type="CDD" id="cd00833">
    <property type="entry name" value="PKS"/>
    <property type="match status" value="1"/>
</dbReference>
<dbReference type="CDD" id="cd05235">
    <property type="entry name" value="SDR_e1"/>
    <property type="match status" value="1"/>
</dbReference>
<dbReference type="FunFam" id="3.10.129.110:FF:000009">
    <property type="entry name" value="Probable polyketide synthase 2"/>
    <property type="match status" value="1"/>
</dbReference>
<dbReference type="FunFam" id="3.40.366.10:FF:000002">
    <property type="entry name" value="Probable polyketide synthase 2"/>
    <property type="match status" value="1"/>
</dbReference>
<dbReference type="FunFam" id="3.40.50.720:FF:000967">
    <property type="entry name" value="Probable polyketide synthase 30"/>
    <property type="match status" value="1"/>
</dbReference>
<dbReference type="FunFam" id="3.40.47.10:FF:000091">
    <property type="entry name" value="Probable polyketide synthase 32"/>
    <property type="match status" value="1"/>
</dbReference>
<dbReference type="FunFam" id="3.40.50.720:FF:000794">
    <property type="entry name" value="Probable polyketide synthase 33"/>
    <property type="match status" value="1"/>
</dbReference>
<dbReference type="Gene3D" id="3.30.70.3290">
    <property type="match status" value="1"/>
</dbReference>
<dbReference type="Gene3D" id="3.40.47.10">
    <property type="match status" value="1"/>
</dbReference>
<dbReference type="Gene3D" id="3.40.366.10">
    <property type="entry name" value="Malonyl-Coenzyme A Acyl Carrier Protein, domain 2"/>
    <property type="match status" value="1"/>
</dbReference>
<dbReference type="Gene3D" id="3.90.180.10">
    <property type="entry name" value="Medium-chain alcohol dehydrogenases, catalytic domain"/>
    <property type="match status" value="1"/>
</dbReference>
<dbReference type="Gene3D" id="3.40.50.720">
    <property type="entry name" value="NAD(P)-binding Rossmann-like Domain"/>
    <property type="match status" value="3"/>
</dbReference>
<dbReference type="Gene3D" id="3.10.129.110">
    <property type="entry name" value="Polyketide synthase dehydratase"/>
    <property type="match status" value="1"/>
</dbReference>
<dbReference type="Gene3D" id="3.40.50.150">
    <property type="entry name" value="Vaccinia Virus protein VP39"/>
    <property type="match status" value="1"/>
</dbReference>
<dbReference type="InterPro" id="IPR001227">
    <property type="entry name" value="Ac_transferase_dom_sf"/>
</dbReference>
<dbReference type="InterPro" id="IPR036736">
    <property type="entry name" value="ACP-like_sf"/>
</dbReference>
<dbReference type="InterPro" id="IPR014043">
    <property type="entry name" value="Acyl_transferase_dom"/>
</dbReference>
<dbReference type="InterPro" id="IPR016035">
    <property type="entry name" value="Acyl_Trfase/lysoPLipase"/>
</dbReference>
<dbReference type="InterPro" id="IPR013154">
    <property type="entry name" value="ADH-like_N"/>
</dbReference>
<dbReference type="InterPro" id="IPR013120">
    <property type="entry name" value="Far_NAD-bd"/>
</dbReference>
<dbReference type="InterPro" id="IPR011032">
    <property type="entry name" value="GroES-like_sf"/>
</dbReference>
<dbReference type="InterPro" id="IPR018201">
    <property type="entry name" value="Ketoacyl_synth_AS"/>
</dbReference>
<dbReference type="InterPro" id="IPR014031">
    <property type="entry name" value="Ketoacyl_synth_C"/>
</dbReference>
<dbReference type="InterPro" id="IPR014030">
    <property type="entry name" value="Ketoacyl_synth_N"/>
</dbReference>
<dbReference type="InterPro" id="IPR016036">
    <property type="entry name" value="Malonyl_transacylase_ACP-bd"/>
</dbReference>
<dbReference type="InterPro" id="IPR036291">
    <property type="entry name" value="NAD(P)-bd_dom_sf"/>
</dbReference>
<dbReference type="InterPro" id="IPR032821">
    <property type="entry name" value="PKS_assoc"/>
</dbReference>
<dbReference type="InterPro" id="IPR020841">
    <property type="entry name" value="PKS_Beta-ketoAc_synthase_dom"/>
</dbReference>
<dbReference type="InterPro" id="IPR042104">
    <property type="entry name" value="PKS_dehydratase_sf"/>
</dbReference>
<dbReference type="InterPro" id="IPR020843">
    <property type="entry name" value="PKS_ER"/>
</dbReference>
<dbReference type="InterPro" id="IPR013968">
    <property type="entry name" value="PKS_KR"/>
</dbReference>
<dbReference type="InterPro" id="IPR049900">
    <property type="entry name" value="PKS_mFAS_DH"/>
</dbReference>
<dbReference type="InterPro" id="IPR050444">
    <property type="entry name" value="Polyketide_Synthase"/>
</dbReference>
<dbReference type="InterPro" id="IPR009081">
    <property type="entry name" value="PP-bd_ACP"/>
</dbReference>
<dbReference type="InterPro" id="IPR029063">
    <property type="entry name" value="SAM-dependent_MTases_sf"/>
</dbReference>
<dbReference type="InterPro" id="IPR010080">
    <property type="entry name" value="Thioester_reductase-like_dom"/>
</dbReference>
<dbReference type="InterPro" id="IPR016039">
    <property type="entry name" value="Thiolase-like"/>
</dbReference>
<dbReference type="PANTHER" id="PTHR45681:SF1">
    <property type="entry name" value="POLYKETIDE SYNTHASE 2-RELATED"/>
    <property type="match status" value="1"/>
</dbReference>
<dbReference type="PANTHER" id="PTHR45681">
    <property type="entry name" value="POLYKETIDE SYNTHASE 44-RELATED"/>
    <property type="match status" value="1"/>
</dbReference>
<dbReference type="Pfam" id="PF23297">
    <property type="entry name" value="ACP_SdgA_C"/>
    <property type="match status" value="1"/>
</dbReference>
<dbReference type="Pfam" id="PF00698">
    <property type="entry name" value="Acyl_transf_1"/>
    <property type="match status" value="1"/>
</dbReference>
<dbReference type="Pfam" id="PF08240">
    <property type="entry name" value="ADH_N"/>
    <property type="match status" value="1"/>
</dbReference>
<dbReference type="Pfam" id="PF13602">
    <property type="entry name" value="ADH_zinc_N_2"/>
    <property type="match status" value="1"/>
</dbReference>
<dbReference type="Pfam" id="PF16197">
    <property type="entry name" value="KAsynt_C_assoc"/>
    <property type="match status" value="1"/>
</dbReference>
<dbReference type="Pfam" id="PF00109">
    <property type="entry name" value="ketoacyl-synt"/>
    <property type="match status" value="1"/>
</dbReference>
<dbReference type="Pfam" id="PF02801">
    <property type="entry name" value="Ketoacyl-synt_C"/>
    <property type="match status" value="1"/>
</dbReference>
<dbReference type="Pfam" id="PF08659">
    <property type="entry name" value="KR"/>
    <property type="match status" value="1"/>
</dbReference>
<dbReference type="Pfam" id="PF07993">
    <property type="entry name" value="NAD_binding_4"/>
    <property type="match status" value="1"/>
</dbReference>
<dbReference type="SMART" id="SM00827">
    <property type="entry name" value="PKS_AT"/>
    <property type="match status" value="1"/>
</dbReference>
<dbReference type="SMART" id="SM00829">
    <property type="entry name" value="PKS_ER"/>
    <property type="match status" value="1"/>
</dbReference>
<dbReference type="SMART" id="SM00822">
    <property type="entry name" value="PKS_KR"/>
    <property type="match status" value="1"/>
</dbReference>
<dbReference type="SMART" id="SM00825">
    <property type="entry name" value="PKS_KS"/>
    <property type="match status" value="1"/>
</dbReference>
<dbReference type="SUPFAM" id="SSF47336">
    <property type="entry name" value="ACP-like"/>
    <property type="match status" value="1"/>
</dbReference>
<dbReference type="SUPFAM" id="SSF52151">
    <property type="entry name" value="FabD/lysophospholipase-like"/>
    <property type="match status" value="1"/>
</dbReference>
<dbReference type="SUPFAM" id="SSF50129">
    <property type="entry name" value="GroES-like"/>
    <property type="match status" value="1"/>
</dbReference>
<dbReference type="SUPFAM" id="SSF51735">
    <property type="entry name" value="NAD(P)-binding Rossmann-fold domains"/>
    <property type="match status" value="3"/>
</dbReference>
<dbReference type="SUPFAM" id="SSF55048">
    <property type="entry name" value="Probable ACP-binding domain of malonyl-CoA ACP transacylase"/>
    <property type="match status" value="1"/>
</dbReference>
<dbReference type="SUPFAM" id="SSF53335">
    <property type="entry name" value="S-adenosyl-L-methionine-dependent methyltransferases"/>
    <property type="match status" value="1"/>
</dbReference>
<dbReference type="SUPFAM" id="SSF53901">
    <property type="entry name" value="Thiolase-like"/>
    <property type="match status" value="1"/>
</dbReference>
<dbReference type="PROSITE" id="PS50075">
    <property type="entry name" value="CARRIER"/>
    <property type="match status" value="1"/>
</dbReference>
<dbReference type="PROSITE" id="PS00606">
    <property type="entry name" value="KS3_1"/>
    <property type="match status" value="1"/>
</dbReference>
<dbReference type="PROSITE" id="PS52004">
    <property type="entry name" value="KS3_2"/>
    <property type="match status" value="1"/>
</dbReference>
<dbReference type="PROSITE" id="PS52019">
    <property type="entry name" value="PKS_MFAS_DH"/>
    <property type="match status" value="1"/>
</dbReference>
<feature type="chain" id="PRO_0000367828" description="Probable polyketide synthase 2">
    <location>
        <begin position="1"/>
        <end position="3010"/>
    </location>
</feature>
<feature type="domain" description="Ketosynthase family 3 (KS3)" evidence="3">
    <location>
        <begin position="9"/>
        <end position="432"/>
    </location>
</feature>
<feature type="domain" description="PKS/mFAS DH" evidence="4">
    <location>
        <begin position="944"/>
        <end position="1235"/>
    </location>
</feature>
<feature type="domain" description="Carrier" evidence="2">
    <location>
        <begin position="2482"/>
        <end position="2559"/>
    </location>
</feature>
<feature type="region of interest" description="Acyl/malonyl transferase">
    <location>
        <begin position="629"/>
        <end position="662"/>
    </location>
</feature>
<feature type="region of interest" description="N-terminal hotdog fold" evidence="4">
    <location>
        <begin position="944"/>
        <end position="1063"/>
    </location>
</feature>
<feature type="region of interest" description="C-terminal hotdog fold" evidence="4">
    <location>
        <begin position="1080"/>
        <end position="1235"/>
    </location>
</feature>
<feature type="active site" description="For beta-ketoacyl synthase activity" evidence="3">
    <location>
        <position position="174"/>
    </location>
</feature>
<feature type="active site" description="For beta-ketoacyl synthase activity" evidence="3">
    <location>
        <position position="313"/>
    </location>
</feature>
<feature type="active site" description="For beta-ketoacyl synthase activity" evidence="3">
    <location>
        <position position="353"/>
    </location>
</feature>
<feature type="active site" description="For acyl/malonyl transferase activity" evidence="5">
    <location>
        <position position="639"/>
    </location>
</feature>
<feature type="active site" description="Proton acceptor; for dehydratase activity" evidence="4">
    <location>
        <position position="976"/>
    </location>
</feature>
<feature type="active site" description="Proton donor; for dehydratase activity" evidence="4">
    <location>
        <position position="1146"/>
    </location>
</feature>
<feature type="modified residue" description="O-(pantetheine 4'-phosphoryl)serine" evidence="2">
    <location>
        <position position="2519"/>
    </location>
</feature>
<comment type="function">
    <text evidence="1">Probable polyketide synthase.</text>
</comment>
<comment type="cofactor">
    <cofactor evidence="1">
        <name>pantetheine 4'-phosphate</name>
        <dbReference type="ChEBI" id="CHEBI:47942"/>
    </cofactor>
    <text evidence="1">Binds 1 phosphopantetheine covalently.</text>
</comment>
<comment type="domain">
    <text evidence="1">Modular protein that is responsible for the completion of one condensation-processing cycle. The beta-ketoacyl synthase region is responsible for the actual condensation reaction while the acyl/malonyl transferase region is responsible for incorporating carboxylic acids units onto an acyl carrier protein (ACP) domain (By similarity).</text>
</comment>
<comment type="miscellaneous">
    <text>Encoded by one of the numerous copies of polyketide synthase genes localized in chromosome 1.</text>
</comment>